<evidence type="ECO:0000255" key="1">
    <source>
        <dbReference type="HAMAP-Rule" id="MF_00048"/>
    </source>
</evidence>
<evidence type="ECO:0000256" key="2">
    <source>
        <dbReference type="SAM" id="MobiDB-lite"/>
    </source>
</evidence>
<accession>A4WEW3</accession>
<reference key="1">
    <citation type="journal article" date="2010" name="PLoS Genet.">
        <title>Genome sequence of the plant growth promoting endophytic bacterium Enterobacter sp. 638.</title>
        <authorList>
            <person name="Taghavi S."/>
            <person name="van der Lelie D."/>
            <person name="Hoffman A."/>
            <person name="Zhang Y.B."/>
            <person name="Walla M.D."/>
            <person name="Vangronsveld J."/>
            <person name="Newman L."/>
            <person name="Monchy S."/>
        </authorList>
    </citation>
    <scope>NUCLEOTIDE SEQUENCE [LARGE SCALE GENOMIC DNA]</scope>
    <source>
        <strain>638</strain>
    </source>
</reference>
<feature type="chain" id="PRO_1000057334" description="UPF0102 protein Ent638_3585">
    <location>
        <begin position="1"/>
        <end position="131"/>
    </location>
</feature>
<feature type="region of interest" description="Disordered" evidence="2">
    <location>
        <begin position="1"/>
        <end position="20"/>
    </location>
</feature>
<proteinExistence type="inferred from homology"/>
<organism>
    <name type="scientific">Enterobacter sp. (strain 638)</name>
    <dbReference type="NCBI Taxonomy" id="399742"/>
    <lineage>
        <taxon>Bacteria</taxon>
        <taxon>Pseudomonadati</taxon>
        <taxon>Pseudomonadota</taxon>
        <taxon>Gammaproteobacteria</taxon>
        <taxon>Enterobacterales</taxon>
        <taxon>Enterobacteriaceae</taxon>
        <taxon>Enterobacter</taxon>
    </lineage>
</organism>
<name>Y3585_ENT38</name>
<sequence>MAQIPAGADRPGKLSRKQTGDAWELKARRWLEGKGLRFIAANVHGRGGEIDLIMKDGQVIVFIEVRFRQSSRFGGAAASVTLAKQHKLLQTAHLWLARHNGSFDTVDCRFDVVAFTGNDIEWLKNAFGEDA</sequence>
<comment type="similarity">
    <text evidence="1">Belongs to the UPF0102 family.</text>
</comment>
<dbReference type="EMBL" id="CP000653">
    <property type="protein sequence ID" value="ABP62243.1"/>
    <property type="molecule type" value="Genomic_DNA"/>
</dbReference>
<dbReference type="RefSeq" id="WP_015960569.1">
    <property type="nucleotide sequence ID" value="NC_009436.1"/>
</dbReference>
<dbReference type="SMR" id="A4WEW3"/>
<dbReference type="STRING" id="399742.Ent638_3585"/>
<dbReference type="KEGG" id="ent:Ent638_3585"/>
<dbReference type="eggNOG" id="COG0792">
    <property type="taxonomic scope" value="Bacteria"/>
</dbReference>
<dbReference type="HOGENOM" id="CLU_115353_1_0_6"/>
<dbReference type="OrthoDB" id="9794876at2"/>
<dbReference type="Proteomes" id="UP000000230">
    <property type="component" value="Chromosome"/>
</dbReference>
<dbReference type="GO" id="GO:0003676">
    <property type="term" value="F:nucleic acid binding"/>
    <property type="evidence" value="ECO:0007669"/>
    <property type="project" value="InterPro"/>
</dbReference>
<dbReference type="Gene3D" id="3.40.1350.10">
    <property type="match status" value="1"/>
</dbReference>
<dbReference type="HAMAP" id="MF_00048">
    <property type="entry name" value="UPF0102"/>
    <property type="match status" value="1"/>
</dbReference>
<dbReference type="InterPro" id="IPR011335">
    <property type="entry name" value="Restrct_endonuc-II-like"/>
</dbReference>
<dbReference type="InterPro" id="IPR011856">
    <property type="entry name" value="tRNA_endonuc-like_dom_sf"/>
</dbReference>
<dbReference type="InterPro" id="IPR003509">
    <property type="entry name" value="UPF0102_YraN-like"/>
</dbReference>
<dbReference type="NCBIfam" id="NF009150">
    <property type="entry name" value="PRK12497.1-3"/>
    <property type="match status" value="1"/>
</dbReference>
<dbReference type="NCBIfam" id="TIGR00252">
    <property type="entry name" value="YraN family protein"/>
    <property type="match status" value="1"/>
</dbReference>
<dbReference type="PANTHER" id="PTHR34039">
    <property type="entry name" value="UPF0102 PROTEIN YRAN"/>
    <property type="match status" value="1"/>
</dbReference>
<dbReference type="PANTHER" id="PTHR34039:SF1">
    <property type="entry name" value="UPF0102 PROTEIN YRAN"/>
    <property type="match status" value="1"/>
</dbReference>
<dbReference type="Pfam" id="PF02021">
    <property type="entry name" value="UPF0102"/>
    <property type="match status" value="1"/>
</dbReference>
<dbReference type="SUPFAM" id="SSF52980">
    <property type="entry name" value="Restriction endonuclease-like"/>
    <property type="match status" value="1"/>
</dbReference>
<gene>
    <name type="ordered locus">Ent638_3585</name>
</gene>
<protein>
    <recommendedName>
        <fullName evidence="1">UPF0102 protein Ent638_3585</fullName>
    </recommendedName>
</protein>